<feature type="chain" id="PRO_0000076765" description="3-isopropylmalate dehydratase large subunit">
    <location>
        <begin position="1"/>
        <end position="476"/>
    </location>
</feature>
<feature type="binding site" evidence="1">
    <location>
        <position position="357"/>
    </location>
    <ligand>
        <name>[4Fe-4S] cluster</name>
        <dbReference type="ChEBI" id="CHEBI:49883"/>
    </ligand>
</feature>
<feature type="binding site" evidence="1">
    <location>
        <position position="417"/>
    </location>
    <ligand>
        <name>[4Fe-4S] cluster</name>
        <dbReference type="ChEBI" id="CHEBI:49883"/>
    </ligand>
</feature>
<feature type="binding site" evidence="1">
    <location>
        <position position="420"/>
    </location>
    <ligand>
        <name>[4Fe-4S] cluster</name>
        <dbReference type="ChEBI" id="CHEBI:49883"/>
    </ligand>
</feature>
<keyword id="KW-0004">4Fe-4S</keyword>
<keyword id="KW-0028">Amino-acid biosynthesis</keyword>
<keyword id="KW-0100">Branched-chain amino acid biosynthesis</keyword>
<keyword id="KW-0408">Iron</keyword>
<keyword id="KW-0411">Iron-sulfur</keyword>
<keyword id="KW-0432">Leucine biosynthesis</keyword>
<keyword id="KW-0456">Lyase</keyword>
<keyword id="KW-0479">Metal-binding</keyword>
<keyword id="KW-1185">Reference proteome</keyword>
<proteinExistence type="inferred from homology"/>
<evidence type="ECO:0000255" key="1">
    <source>
        <dbReference type="HAMAP-Rule" id="MF_01026"/>
    </source>
</evidence>
<dbReference type="EC" id="4.2.1.33" evidence="1"/>
<dbReference type="EMBL" id="AE016958">
    <property type="protein sequence ID" value="AAS05574.1"/>
    <property type="molecule type" value="Genomic_DNA"/>
</dbReference>
<dbReference type="RefSeq" id="WP_003875016.1">
    <property type="nucleotide sequence ID" value="NZ_CP106873.1"/>
</dbReference>
<dbReference type="SMR" id="Q73VI7"/>
<dbReference type="STRING" id="262316.MAP_3026c"/>
<dbReference type="KEGG" id="mpa:MAP_3026c"/>
<dbReference type="eggNOG" id="COG0065">
    <property type="taxonomic scope" value="Bacteria"/>
</dbReference>
<dbReference type="HOGENOM" id="CLU_006714_3_4_11"/>
<dbReference type="UniPathway" id="UPA00048">
    <property type="reaction ID" value="UER00071"/>
</dbReference>
<dbReference type="Proteomes" id="UP000000580">
    <property type="component" value="Chromosome"/>
</dbReference>
<dbReference type="GO" id="GO:0003861">
    <property type="term" value="F:3-isopropylmalate dehydratase activity"/>
    <property type="evidence" value="ECO:0007669"/>
    <property type="project" value="UniProtKB-UniRule"/>
</dbReference>
<dbReference type="GO" id="GO:0051539">
    <property type="term" value="F:4 iron, 4 sulfur cluster binding"/>
    <property type="evidence" value="ECO:0007669"/>
    <property type="project" value="UniProtKB-KW"/>
</dbReference>
<dbReference type="GO" id="GO:0046872">
    <property type="term" value="F:metal ion binding"/>
    <property type="evidence" value="ECO:0007669"/>
    <property type="project" value="UniProtKB-KW"/>
</dbReference>
<dbReference type="GO" id="GO:0009098">
    <property type="term" value="P:L-leucine biosynthetic process"/>
    <property type="evidence" value="ECO:0007669"/>
    <property type="project" value="UniProtKB-UniRule"/>
</dbReference>
<dbReference type="CDD" id="cd01583">
    <property type="entry name" value="IPMI"/>
    <property type="match status" value="1"/>
</dbReference>
<dbReference type="FunFam" id="3.30.499.10:FF:000006">
    <property type="entry name" value="3-isopropylmalate dehydratase large subunit"/>
    <property type="match status" value="1"/>
</dbReference>
<dbReference type="FunFam" id="3.30.499.10:FF:000007">
    <property type="entry name" value="3-isopropylmalate dehydratase large subunit"/>
    <property type="match status" value="1"/>
</dbReference>
<dbReference type="Gene3D" id="3.30.499.10">
    <property type="entry name" value="Aconitase, domain 3"/>
    <property type="match status" value="2"/>
</dbReference>
<dbReference type="HAMAP" id="MF_01026">
    <property type="entry name" value="LeuC_type1"/>
    <property type="match status" value="1"/>
</dbReference>
<dbReference type="InterPro" id="IPR004430">
    <property type="entry name" value="3-IsopropMal_deHydase_lsu"/>
</dbReference>
<dbReference type="InterPro" id="IPR015931">
    <property type="entry name" value="Acnase/IPM_dHydase_lsu_aba_1/3"/>
</dbReference>
<dbReference type="InterPro" id="IPR001030">
    <property type="entry name" value="Acoase/IPM_deHydtase_lsu_aba"/>
</dbReference>
<dbReference type="InterPro" id="IPR018136">
    <property type="entry name" value="Aconitase_4Fe-4S_BS"/>
</dbReference>
<dbReference type="InterPro" id="IPR036008">
    <property type="entry name" value="Aconitase_4Fe-4S_dom"/>
</dbReference>
<dbReference type="InterPro" id="IPR050067">
    <property type="entry name" value="IPM_dehydratase_rel_enz"/>
</dbReference>
<dbReference type="InterPro" id="IPR033941">
    <property type="entry name" value="IPMI_cat"/>
</dbReference>
<dbReference type="NCBIfam" id="TIGR00170">
    <property type="entry name" value="leuC"/>
    <property type="match status" value="1"/>
</dbReference>
<dbReference type="NCBIfam" id="NF004016">
    <property type="entry name" value="PRK05478.1"/>
    <property type="match status" value="1"/>
</dbReference>
<dbReference type="NCBIfam" id="NF009116">
    <property type="entry name" value="PRK12466.1"/>
    <property type="match status" value="1"/>
</dbReference>
<dbReference type="PANTHER" id="PTHR43822:SF9">
    <property type="entry name" value="3-ISOPROPYLMALATE DEHYDRATASE"/>
    <property type="match status" value="1"/>
</dbReference>
<dbReference type="PANTHER" id="PTHR43822">
    <property type="entry name" value="HOMOACONITASE, MITOCHONDRIAL-RELATED"/>
    <property type="match status" value="1"/>
</dbReference>
<dbReference type="Pfam" id="PF00330">
    <property type="entry name" value="Aconitase"/>
    <property type="match status" value="1"/>
</dbReference>
<dbReference type="PRINTS" id="PR00415">
    <property type="entry name" value="ACONITASE"/>
</dbReference>
<dbReference type="SUPFAM" id="SSF53732">
    <property type="entry name" value="Aconitase iron-sulfur domain"/>
    <property type="match status" value="1"/>
</dbReference>
<dbReference type="PROSITE" id="PS00450">
    <property type="entry name" value="ACONITASE_1"/>
    <property type="match status" value="1"/>
</dbReference>
<dbReference type="PROSITE" id="PS01244">
    <property type="entry name" value="ACONITASE_2"/>
    <property type="match status" value="1"/>
</dbReference>
<reference key="1">
    <citation type="journal article" date="2005" name="Proc. Natl. Acad. Sci. U.S.A.">
        <title>The complete genome sequence of Mycobacterium avium subspecies paratuberculosis.</title>
        <authorList>
            <person name="Li L."/>
            <person name="Bannantine J.P."/>
            <person name="Zhang Q."/>
            <person name="Amonsin A."/>
            <person name="May B.J."/>
            <person name="Alt D."/>
            <person name="Banerji N."/>
            <person name="Kanjilal S."/>
            <person name="Kapur V."/>
        </authorList>
    </citation>
    <scope>NUCLEOTIDE SEQUENCE [LARGE SCALE GENOMIC DNA]</scope>
    <source>
        <strain>ATCC BAA-968 / K-10</strain>
    </source>
</reference>
<accession>Q73VI7</accession>
<gene>
    <name evidence="1" type="primary">leuC</name>
    <name type="ordered locus">MAP_3026c</name>
</gene>
<comment type="function">
    <text evidence="1">Catalyzes the isomerization between 2-isopropylmalate and 3-isopropylmalate, via the formation of 2-isopropylmaleate.</text>
</comment>
<comment type="catalytic activity">
    <reaction evidence="1">
        <text>(2R,3S)-3-isopropylmalate = (2S)-2-isopropylmalate</text>
        <dbReference type="Rhea" id="RHEA:32287"/>
        <dbReference type="ChEBI" id="CHEBI:1178"/>
        <dbReference type="ChEBI" id="CHEBI:35121"/>
        <dbReference type="EC" id="4.2.1.33"/>
    </reaction>
</comment>
<comment type="cofactor">
    <cofactor evidence="1">
        <name>[4Fe-4S] cluster</name>
        <dbReference type="ChEBI" id="CHEBI:49883"/>
    </cofactor>
    <text evidence="1">Binds 1 [4Fe-4S] cluster per subunit.</text>
</comment>
<comment type="pathway">
    <text evidence="1">Amino-acid biosynthesis; L-leucine biosynthesis; L-leucine from 3-methyl-2-oxobutanoate: step 2/4.</text>
</comment>
<comment type="subunit">
    <text evidence="1">Heterodimer of LeuC and LeuD.</text>
</comment>
<comment type="similarity">
    <text evidence="1">Belongs to the aconitase/IPM isomerase family. LeuC type 1 subfamily.</text>
</comment>
<sequence length="476" mass="50414">MGIDTGTTATPRTLAEKVWDDHVVVSGGANEPDLIYIDLHLVHEVTSPQAFDGLRLAGRPVRRPDLTLATEDHNVPTVDIDKPIADPVSRTQVETLRRNCAEFGVRLYPMGDAEQGIVHVVGPQLGLTQPGMTVVCGDSHTSTHGAFGALAMGIGTSEVEHVLATQTLPLRPFKTMAVNVDGELPAGVTAKDIILALIAKIGTGGGQGHVIEYRGSAIESLSMEGRMTVCNMSIEAGARAGMIAPDDTTYEFLRDRPHAPKGAQWDAAMRYWQQLRTDPGAVFDTEVYLDAASLSPFVTWGTNPGQGVPLAAAVPDPELMTDDAERQAAEKALAYMDLRPGTPMRDIAVDAVFVGSCTNGRIEDLRVVADVLRGRKVAPGVRMLVVPGSMRVRAQAEAEGLGEVFTAAGAEWRQAGCSMCLGMNPDQLAPGERCAATSNRNFEGRQGKGGRTHLVSPAVAAATAVRGTLSAPADLD</sequence>
<protein>
    <recommendedName>
        <fullName evidence="1">3-isopropylmalate dehydratase large subunit</fullName>
        <ecNumber evidence="1">4.2.1.33</ecNumber>
    </recommendedName>
    <alternativeName>
        <fullName evidence="1">Alpha-IPM isomerase</fullName>
        <shortName evidence="1">IPMI</shortName>
    </alternativeName>
    <alternativeName>
        <fullName evidence="1">Isopropylmalate isomerase</fullName>
    </alternativeName>
</protein>
<organism>
    <name type="scientific">Mycolicibacterium paratuberculosis (strain ATCC BAA-968 / K-10)</name>
    <name type="common">Mycobacterium paratuberculosis</name>
    <dbReference type="NCBI Taxonomy" id="262316"/>
    <lineage>
        <taxon>Bacteria</taxon>
        <taxon>Bacillati</taxon>
        <taxon>Actinomycetota</taxon>
        <taxon>Actinomycetes</taxon>
        <taxon>Mycobacteriales</taxon>
        <taxon>Mycobacteriaceae</taxon>
        <taxon>Mycobacterium</taxon>
        <taxon>Mycobacterium avium complex (MAC)</taxon>
    </lineage>
</organism>
<name>LEUC_MYCPA</name>